<evidence type="ECO:0000250" key="1"/>
<evidence type="ECO:0000255" key="2">
    <source>
        <dbReference type="PROSITE-ProRule" id="PRU00223"/>
    </source>
</evidence>
<evidence type="ECO:0000256" key="3">
    <source>
        <dbReference type="SAM" id="MobiDB-lite"/>
    </source>
</evidence>
<evidence type="ECO:0000305" key="4"/>
<protein>
    <recommendedName>
        <fullName>WRKY transcription factor 23</fullName>
    </recommendedName>
    <alternativeName>
        <fullName>WRKY DNA-binding protein 23</fullName>
    </alternativeName>
</protein>
<organism>
    <name type="scientific">Arabidopsis thaliana</name>
    <name type="common">Mouse-ear cress</name>
    <dbReference type="NCBI Taxonomy" id="3702"/>
    <lineage>
        <taxon>Eukaryota</taxon>
        <taxon>Viridiplantae</taxon>
        <taxon>Streptophyta</taxon>
        <taxon>Embryophyta</taxon>
        <taxon>Tracheophyta</taxon>
        <taxon>Spermatophyta</taxon>
        <taxon>Magnoliopsida</taxon>
        <taxon>eudicotyledons</taxon>
        <taxon>Gunneridae</taxon>
        <taxon>Pentapetalae</taxon>
        <taxon>rosids</taxon>
        <taxon>malvids</taxon>
        <taxon>Brassicales</taxon>
        <taxon>Brassicaceae</taxon>
        <taxon>Camelineae</taxon>
        <taxon>Arabidopsis</taxon>
    </lineage>
</organism>
<feature type="chain" id="PRO_0000133665" description="WRKY transcription factor 23">
    <location>
        <begin position="1"/>
        <end position="337"/>
    </location>
</feature>
<feature type="DNA-binding region" description="WRKY" evidence="2">
    <location>
        <begin position="168"/>
        <end position="233"/>
    </location>
</feature>
<feature type="region of interest" description="Disordered" evidence="3">
    <location>
        <begin position="100"/>
        <end position="160"/>
    </location>
</feature>
<feature type="compositionally biased region" description="Low complexity" evidence="3">
    <location>
        <begin position="106"/>
        <end position="118"/>
    </location>
</feature>
<feature type="compositionally biased region" description="Basic residues" evidence="3">
    <location>
        <begin position="142"/>
        <end position="155"/>
    </location>
</feature>
<feature type="sequence conflict" description="In Ref. 6; AAM61221." evidence="4" ref="6">
    <original>S</original>
    <variation>Y</variation>
    <location>
        <position position="331"/>
    </location>
</feature>
<comment type="function">
    <text evidence="1">Transcription factor. Interacts specifically with the W box (5'-(T)TGAC[CT]-3'), a frequently occurring elicitor-responsive cis-acting element (By similarity).</text>
</comment>
<comment type="subcellular location">
    <subcellularLocation>
        <location evidence="4">Nucleus</location>
    </subcellularLocation>
</comment>
<comment type="similarity">
    <text evidence="4">Belongs to the WRKY group II-c family.</text>
</comment>
<dbReference type="EMBL" id="AY052647">
    <property type="protein sequence ID" value="AAL11008.1"/>
    <property type="molecule type" value="mRNA"/>
</dbReference>
<dbReference type="EMBL" id="AC002337">
    <property type="protein sequence ID" value="AAB63826.1"/>
    <property type="molecule type" value="Genomic_DNA"/>
</dbReference>
<dbReference type="EMBL" id="CP002685">
    <property type="protein sequence ID" value="AEC10821.1"/>
    <property type="molecule type" value="Genomic_DNA"/>
</dbReference>
<dbReference type="EMBL" id="AK117918">
    <property type="protein sequence ID" value="BAC42556.1"/>
    <property type="molecule type" value="mRNA"/>
</dbReference>
<dbReference type="EMBL" id="BT006238">
    <property type="protein sequence ID" value="AAP12887.1"/>
    <property type="molecule type" value="mRNA"/>
</dbReference>
<dbReference type="EMBL" id="AY084658">
    <property type="protein sequence ID" value="AAM61221.1"/>
    <property type="molecule type" value="mRNA"/>
</dbReference>
<dbReference type="PIR" id="A84913">
    <property type="entry name" value="A84913"/>
</dbReference>
<dbReference type="RefSeq" id="NP_182248.1">
    <property type="nucleotide sequence ID" value="NM_130294.4"/>
</dbReference>
<dbReference type="SMR" id="O22900"/>
<dbReference type="BioGRID" id="4674">
    <property type="interactions" value="2"/>
</dbReference>
<dbReference type="FunCoup" id="O22900">
    <property type="interactions" value="2"/>
</dbReference>
<dbReference type="IntAct" id="O22900">
    <property type="interactions" value="2"/>
</dbReference>
<dbReference type="STRING" id="3702.O22900"/>
<dbReference type="PaxDb" id="3702-AT2G47260.1"/>
<dbReference type="ProteomicsDB" id="234387"/>
<dbReference type="EnsemblPlants" id="AT2G47260.1">
    <property type="protein sequence ID" value="AT2G47260.1"/>
    <property type="gene ID" value="AT2G47260"/>
</dbReference>
<dbReference type="GeneID" id="819339"/>
<dbReference type="Gramene" id="AT2G47260.1">
    <property type="protein sequence ID" value="AT2G47260.1"/>
    <property type="gene ID" value="AT2G47260"/>
</dbReference>
<dbReference type="KEGG" id="ath:AT2G47260"/>
<dbReference type="Araport" id="AT2G47260"/>
<dbReference type="TAIR" id="AT2G47260">
    <property type="gene designation" value="WRKY23"/>
</dbReference>
<dbReference type="eggNOG" id="ENOG502QU0Y">
    <property type="taxonomic scope" value="Eukaryota"/>
</dbReference>
<dbReference type="HOGENOM" id="CLU_033779_0_0_1"/>
<dbReference type="InParanoid" id="O22900"/>
<dbReference type="OMA" id="NSHANEY"/>
<dbReference type="PhylomeDB" id="O22900"/>
<dbReference type="PRO" id="PR:O22900"/>
<dbReference type="Proteomes" id="UP000006548">
    <property type="component" value="Chromosome 2"/>
</dbReference>
<dbReference type="ExpressionAtlas" id="O22900">
    <property type="expression patterns" value="baseline and differential"/>
</dbReference>
<dbReference type="GO" id="GO:0005634">
    <property type="term" value="C:nucleus"/>
    <property type="evidence" value="ECO:0007669"/>
    <property type="project" value="UniProtKB-SubCell"/>
</dbReference>
<dbReference type="GO" id="GO:0003700">
    <property type="term" value="F:DNA-binding transcription factor activity"/>
    <property type="evidence" value="ECO:0000250"/>
    <property type="project" value="TAIR"/>
</dbReference>
<dbReference type="GO" id="GO:0000976">
    <property type="term" value="F:transcription cis-regulatory region binding"/>
    <property type="evidence" value="ECO:0000353"/>
    <property type="project" value="TAIR"/>
</dbReference>
<dbReference type="GO" id="GO:1901703">
    <property type="term" value="P:protein localization involved in auxin polar transport"/>
    <property type="evidence" value="ECO:0000315"/>
    <property type="project" value="TAIR"/>
</dbReference>
<dbReference type="GO" id="GO:0009733">
    <property type="term" value="P:response to auxin"/>
    <property type="evidence" value="ECO:0000270"/>
    <property type="project" value="TAIR"/>
</dbReference>
<dbReference type="GO" id="GO:0009624">
    <property type="term" value="P:response to nematode"/>
    <property type="evidence" value="ECO:0000270"/>
    <property type="project" value="TAIR"/>
</dbReference>
<dbReference type="FunFam" id="2.20.25.80:FF:000003">
    <property type="entry name" value="WRKY transcription factor 57"/>
    <property type="match status" value="1"/>
</dbReference>
<dbReference type="Gene3D" id="2.20.25.80">
    <property type="entry name" value="WRKY domain"/>
    <property type="match status" value="1"/>
</dbReference>
<dbReference type="InterPro" id="IPR017396">
    <property type="entry name" value="TF_WRKY_IIc"/>
</dbReference>
<dbReference type="InterPro" id="IPR003657">
    <property type="entry name" value="WRKY_dom"/>
</dbReference>
<dbReference type="InterPro" id="IPR036576">
    <property type="entry name" value="WRKY_dom_sf"/>
</dbReference>
<dbReference type="InterPro" id="IPR044810">
    <property type="entry name" value="WRKY_plant"/>
</dbReference>
<dbReference type="PANTHER" id="PTHR31221:SF323">
    <property type="entry name" value="WRKY TRANSCRIPTION FACTOR 23"/>
    <property type="match status" value="1"/>
</dbReference>
<dbReference type="PANTHER" id="PTHR31221">
    <property type="entry name" value="WRKY TRANSCRIPTION FACTOR PROTEIN 1-RELATED"/>
    <property type="match status" value="1"/>
</dbReference>
<dbReference type="Pfam" id="PF03106">
    <property type="entry name" value="WRKY"/>
    <property type="match status" value="1"/>
</dbReference>
<dbReference type="PIRSF" id="PIRSF038130">
    <property type="entry name" value="TF_WRKY_IIc"/>
    <property type="match status" value="1"/>
</dbReference>
<dbReference type="SMART" id="SM00774">
    <property type="entry name" value="WRKY"/>
    <property type="match status" value="1"/>
</dbReference>
<dbReference type="SUPFAM" id="SSF118290">
    <property type="entry name" value="WRKY DNA-binding domain"/>
    <property type="match status" value="1"/>
</dbReference>
<dbReference type="PROSITE" id="PS50811">
    <property type="entry name" value="WRKY"/>
    <property type="match status" value="1"/>
</dbReference>
<accession>O22900</accession>
<keyword id="KW-0238">DNA-binding</keyword>
<keyword id="KW-0539">Nucleus</keyword>
<keyword id="KW-1185">Reference proteome</keyword>
<keyword id="KW-0804">Transcription</keyword>
<keyword id="KW-0805">Transcription regulation</keyword>
<sequence length="337" mass="37685">MEFTDFSKTSFYYPSSQSVWDFGDLAAAERHSLGFMELLSSQQHQDFATVSPHSFLLQTSQPQTQTQPSAKLSSSIIQAPPSEQLVTSKVESLCSDHLLINPPATPNSSSISSASSEALNEEKPKTEDNEEEGGEDQQEKSHTKKQLKAKKNNQKRQREARVAFMTKSEVDHLEDGYRWRKYGQKAVKNSPFPRSYYRCTTASCNVKKRVERSFRDPSTVVTTYEGQHTHISPLTSRPISTGGFFGSSGAASSLGNGCFGFPIDGSTLISPQFQQLVQYHHQQQQQELMSCFGGVNEYLNSHANEYGDDNRVKKSRVLVKDNGLLQDVVPSHMLKEE</sequence>
<proteinExistence type="evidence at transcript level"/>
<reference key="1">
    <citation type="submission" date="2001-08" db="EMBL/GenBank/DDBJ databases">
        <title>Arabidopsis thaliana transcription factor WRKY23.</title>
        <authorList>
            <person name="Ulker B."/>
            <person name="Kushnir S."/>
            <person name="Somssich I.E."/>
        </authorList>
    </citation>
    <scope>NUCLEOTIDE SEQUENCE [MRNA]</scope>
    <source>
        <strain>cv. Columbia</strain>
        <tissue>Flower</tissue>
    </source>
</reference>
<reference key="2">
    <citation type="journal article" date="1999" name="Nature">
        <title>Sequence and analysis of chromosome 2 of the plant Arabidopsis thaliana.</title>
        <authorList>
            <person name="Lin X."/>
            <person name="Kaul S."/>
            <person name="Rounsley S.D."/>
            <person name="Shea T.P."/>
            <person name="Benito M.-I."/>
            <person name="Town C.D."/>
            <person name="Fujii C.Y."/>
            <person name="Mason T.M."/>
            <person name="Bowman C.L."/>
            <person name="Barnstead M.E."/>
            <person name="Feldblyum T.V."/>
            <person name="Buell C.R."/>
            <person name="Ketchum K.A."/>
            <person name="Lee J.J."/>
            <person name="Ronning C.M."/>
            <person name="Koo H.L."/>
            <person name="Moffat K.S."/>
            <person name="Cronin L.A."/>
            <person name="Shen M."/>
            <person name="Pai G."/>
            <person name="Van Aken S."/>
            <person name="Umayam L."/>
            <person name="Tallon L.J."/>
            <person name="Gill J.E."/>
            <person name="Adams M.D."/>
            <person name="Carrera A.J."/>
            <person name="Creasy T.H."/>
            <person name="Goodman H.M."/>
            <person name="Somerville C.R."/>
            <person name="Copenhaver G.P."/>
            <person name="Preuss D."/>
            <person name="Nierman W.C."/>
            <person name="White O."/>
            <person name="Eisen J.A."/>
            <person name="Salzberg S.L."/>
            <person name="Fraser C.M."/>
            <person name="Venter J.C."/>
        </authorList>
    </citation>
    <scope>NUCLEOTIDE SEQUENCE [LARGE SCALE GENOMIC DNA]</scope>
    <source>
        <strain>cv. Columbia</strain>
    </source>
</reference>
<reference key="3">
    <citation type="journal article" date="2017" name="Plant J.">
        <title>Araport11: a complete reannotation of the Arabidopsis thaliana reference genome.</title>
        <authorList>
            <person name="Cheng C.Y."/>
            <person name="Krishnakumar V."/>
            <person name="Chan A.P."/>
            <person name="Thibaud-Nissen F."/>
            <person name="Schobel S."/>
            <person name="Town C.D."/>
        </authorList>
    </citation>
    <scope>GENOME REANNOTATION</scope>
    <source>
        <strain>cv. Columbia</strain>
    </source>
</reference>
<reference key="4">
    <citation type="journal article" date="2002" name="Science">
        <title>Functional annotation of a full-length Arabidopsis cDNA collection.</title>
        <authorList>
            <person name="Seki M."/>
            <person name="Narusaka M."/>
            <person name="Kamiya A."/>
            <person name="Ishida J."/>
            <person name="Satou M."/>
            <person name="Sakurai T."/>
            <person name="Nakajima M."/>
            <person name="Enju A."/>
            <person name="Akiyama K."/>
            <person name="Oono Y."/>
            <person name="Muramatsu M."/>
            <person name="Hayashizaki Y."/>
            <person name="Kawai J."/>
            <person name="Carninci P."/>
            <person name="Itoh M."/>
            <person name="Ishii Y."/>
            <person name="Arakawa T."/>
            <person name="Shibata K."/>
            <person name="Shinagawa A."/>
            <person name="Shinozaki K."/>
        </authorList>
    </citation>
    <scope>NUCLEOTIDE SEQUENCE [LARGE SCALE MRNA]</scope>
    <source>
        <strain>cv. Columbia</strain>
    </source>
</reference>
<reference key="5">
    <citation type="journal article" date="2003" name="Science">
        <title>Empirical analysis of transcriptional activity in the Arabidopsis genome.</title>
        <authorList>
            <person name="Yamada K."/>
            <person name="Lim J."/>
            <person name="Dale J.M."/>
            <person name="Chen H."/>
            <person name="Shinn P."/>
            <person name="Palm C.J."/>
            <person name="Southwick A.M."/>
            <person name="Wu H.C."/>
            <person name="Kim C.J."/>
            <person name="Nguyen M."/>
            <person name="Pham P.K."/>
            <person name="Cheuk R.F."/>
            <person name="Karlin-Newmann G."/>
            <person name="Liu S.X."/>
            <person name="Lam B."/>
            <person name="Sakano H."/>
            <person name="Wu T."/>
            <person name="Yu G."/>
            <person name="Miranda M."/>
            <person name="Quach H.L."/>
            <person name="Tripp M."/>
            <person name="Chang C.H."/>
            <person name="Lee J.M."/>
            <person name="Toriumi M.J."/>
            <person name="Chan M.M."/>
            <person name="Tang C.C."/>
            <person name="Onodera C.S."/>
            <person name="Deng J.M."/>
            <person name="Akiyama K."/>
            <person name="Ansari Y."/>
            <person name="Arakawa T."/>
            <person name="Banh J."/>
            <person name="Banno F."/>
            <person name="Bowser L."/>
            <person name="Brooks S.Y."/>
            <person name="Carninci P."/>
            <person name="Chao Q."/>
            <person name="Choy N."/>
            <person name="Enju A."/>
            <person name="Goldsmith A.D."/>
            <person name="Gurjal M."/>
            <person name="Hansen N.F."/>
            <person name="Hayashizaki Y."/>
            <person name="Johnson-Hopson C."/>
            <person name="Hsuan V.W."/>
            <person name="Iida K."/>
            <person name="Karnes M."/>
            <person name="Khan S."/>
            <person name="Koesema E."/>
            <person name="Ishida J."/>
            <person name="Jiang P.X."/>
            <person name="Jones T."/>
            <person name="Kawai J."/>
            <person name="Kamiya A."/>
            <person name="Meyers C."/>
            <person name="Nakajima M."/>
            <person name="Narusaka M."/>
            <person name="Seki M."/>
            <person name="Sakurai T."/>
            <person name="Satou M."/>
            <person name="Tamse R."/>
            <person name="Vaysberg M."/>
            <person name="Wallender E.K."/>
            <person name="Wong C."/>
            <person name="Yamamura Y."/>
            <person name="Yuan S."/>
            <person name="Shinozaki K."/>
            <person name="Davis R.W."/>
            <person name="Theologis A."/>
            <person name="Ecker J.R."/>
        </authorList>
    </citation>
    <scope>NUCLEOTIDE SEQUENCE [LARGE SCALE MRNA]</scope>
    <source>
        <strain>cv. Columbia</strain>
    </source>
</reference>
<reference key="6">
    <citation type="submission" date="2002-03" db="EMBL/GenBank/DDBJ databases">
        <title>Full-length cDNA from Arabidopsis thaliana.</title>
        <authorList>
            <person name="Brover V.V."/>
            <person name="Troukhan M.E."/>
            <person name="Alexandrov N.A."/>
            <person name="Lu Y.-P."/>
            <person name="Flavell R.B."/>
            <person name="Feldmann K.A."/>
        </authorList>
    </citation>
    <scope>NUCLEOTIDE SEQUENCE [LARGE SCALE MRNA]</scope>
</reference>
<name>WRK23_ARATH</name>
<gene>
    <name type="primary">WRKY23</name>
    <name type="ordered locus">At2g47260</name>
    <name type="ORF">T8I13.10</name>
</gene>